<comment type="function">
    <text evidence="4">Chemotactic-signal transducers respond to changes in the concentration of attractants and repellents in the environment, transduce a signal from the outside to the inside of the cell, and facilitate sensory adaptation through the variation of the level of methylation. PscA recognizes specifically and with high affinity L-Asp, D-Asp and L-Glu. It exerts a double function, in mediating chemotaxis to these amino acids and in modulating cyclic di-GMP (c-di-GMP) levels, causing alterations in biofilm development. Plays a key role in the infection process. It may facilitate bacterial entry into the plant.</text>
</comment>
<comment type="subcellular location">
    <subcellularLocation>
        <location evidence="6">Cell inner membrane</location>
        <topology evidence="1">Multi-pass membrane protein</topology>
    </subcellularLocation>
</comment>
<comment type="disruption phenotype">
    <text evidence="4">Mutant does not respond to L-Asp, whereas chemotaxis to D-Asp and L-Glu is significantly reduced. Mutant shows increased c-di-GMP level, a modest but significant increase in biofilm formation and reduced swarming motility. It also shows reduced virulence in tomato plants.</text>
</comment>
<comment type="similarity">
    <text evidence="6">Belongs to the methyl-accepting chemotaxis (MCP) protein family.</text>
</comment>
<dbReference type="EMBL" id="AE016853">
    <property type="protein sequence ID" value="AAO55987.1"/>
    <property type="molecule type" value="Genomic_DNA"/>
</dbReference>
<dbReference type="RefSeq" id="NP_792292.1">
    <property type="nucleotide sequence ID" value="NC_004578.1"/>
</dbReference>
<dbReference type="RefSeq" id="WP_011104030.1">
    <property type="nucleotide sequence ID" value="NC_004578.1"/>
</dbReference>
<dbReference type="SMR" id="Q882Z2"/>
<dbReference type="STRING" id="223283.PSPTO_2480"/>
<dbReference type="GeneID" id="1184132"/>
<dbReference type="KEGG" id="pst:PSPTO_2480"/>
<dbReference type="PATRIC" id="fig|223283.9.peg.2519"/>
<dbReference type="eggNOG" id="COG0840">
    <property type="taxonomic scope" value="Bacteria"/>
</dbReference>
<dbReference type="HOGENOM" id="CLU_000445_107_19_6"/>
<dbReference type="OrthoDB" id="7021108at2"/>
<dbReference type="PhylomeDB" id="Q882Z2"/>
<dbReference type="PHI-base" id="PHI:9608"/>
<dbReference type="Proteomes" id="UP000002515">
    <property type="component" value="Chromosome"/>
</dbReference>
<dbReference type="GO" id="GO:0005886">
    <property type="term" value="C:plasma membrane"/>
    <property type="evidence" value="ECO:0007669"/>
    <property type="project" value="UniProtKB-SubCell"/>
</dbReference>
<dbReference type="GO" id="GO:0004888">
    <property type="term" value="F:transmembrane signaling receptor activity"/>
    <property type="evidence" value="ECO:0007669"/>
    <property type="project" value="InterPro"/>
</dbReference>
<dbReference type="GO" id="GO:0006935">
    <property type="term" value="P:chemotaxis"/>
    <property type="evidence" value="ECO:0007669"/>
    <property type="project" value="UniProtKB-KW"/>
</dbReference>
<dbReference type="GO" id="GO:0007165">
    <property type="term" value="P:signal transduction"/>
    <property type="evidence" value="ECO:0007669"/>
    <property type="project" value="UniProtKB-KW"/>
</dbReference>
<dbReference type="CDD" id="cd06225">
    <property type="entry name" value="HAMP"/>
    <property type="match status" value="1"/>
</dbReference>
<dbReference type="CDD" id="cd11386">
    <property type="entry name" value="MCP_signal"/>
    <property type="match status" value="1"/>
</dbReference>
<dbReference type="CDD" id="cd12913">
    <property type="entry name" value="PDC1_MCP_like"/>
    <property type="match status" value="1"/>
</dbReference>
<dbReference type="CDD" id="cd12912">
    <property type="entry name" value="PDC2_MCP_like"/>
    <property type="match status" value="1"/>
</dbReference>
<dbReference type="FunFam" id="1.10.287.950:FF:000001">
    <property type="entry name" value="Methyl-accepting chemotaxis sensory transducer"/>
    <property type="match status" value="1"/>
</dbReference>
<dbReference type="Gene3D" id="1.10.287.950">
    <property type="entry name" value="Methyl-accepting chemotaxis protein"/>
    <property type="match status" value="1"/>
</dbReference>
<dbReference type="Gene3D" id="3.30.450.20">
    <property type="entry name" value="PAS domain"/>
    <property type="match status" value="2"/>
</dbReference>
<dbReference type="InterPro" id="IPR004090">
    <property type="entry name" value="Chemotax_Me-accpt_rcpt"/>
</dbReference>
<dbReference type="InterPro" id="IPR033479">
    <property type="entry name" value="dCache_1"/>
</dbReference>
<dbReference type="InterPro" id="IPR003660">
    <property type="entry name" value="HAMP_dom"/>
</dbReference>
<dbReference type="InterPro" id="IPR004089">
    <property type="entry name" value="MCPsignal_dom"/>
</dbReference>
<dbReference type="InterPro" id="IPR029151">
    <property type="entry name" value="Sensor-like_sf"/>
</dbReference>
<dbReference type="InterPro" id="IPR000727">
    <property type="entry name" value="T_SNARE_dom"/>
</dbReference>
<dbReference type="PANTHER" id="PTHR32089:SF39">
    <property type="entry name" value="METHYL-ACCEPTING CHEMOTAXIS PROTEIN HLYB"/>
    <property type="match status" value="1"/>
</dbReference>
<dbReference type="PANTHER" id="PTHR32089">
    <property type="entry name" value="METHYL-ACCEPTING CHEMOTAXIS PROTEIN MCPB"/>
    <property type="match status" value="1"/>
</dbReference>
<dbReference type="Pfam" id="PF02743">
    <property type="entry name" value="dCache_1"/>
    <property type="match status" value="1"/>
</dbReference>
<dbReference type="Pfam" id="PF00672">
    <property type="entry name" value="HAMP"/>
    <property type="match status" value="1"/>
</dbReference>
<dbReference type="Pfam" id="PF00015">
    <property type="entry name" value="MCPsignal"/>
    <property type="match status" value="1"/>
</dbReference>
<dbReference type="PRINTS" id="PR00260">
    <property type="entry name" value="CHEMTRNSDUCR"/>
</dbReference>
<dbReference type="SMART" id="SM00304">
    <property type="entry name" value="HAMP"/>
    <property type="match status" value="2"/>
</dbReference>
<dbReference type="SMART" id="SM00283">
    <property type="entry name" value="MA"/>
    <property type="match status" value="1"/>
</dbReference>
<dbReference type="SUPFAM" id="SSF58104">
    <property type="entry name" value="Methyl-accepting chemotaxis protein (MCP) signaling domain"/>
    <property type="match status" value="1"/>
</dbReference>
<dbReference type="SUPFAM" id="SSF103190">
    <property type="entry name" value="Sensory domain-like"/>
    <property type="match status" value="1"/>
</dbReference>
<dbReference type="PROSITE" id="PS50111">
    <property type="entry name" value="CHEMOTAXIS_TRANSDUC_2"/>
    <property type="match status" value="1"/>
</dbReference>
<dbReference type="PROSITE" id="PS50885">
    <property type="entry name" value="HAMP"/>
    <property type="match status" value="1"/>
</dbReference>
<protein>
    <recommendedName>
        <fullName evidence="6">Methyl-accepting chemotaxis protein PscA</fullName>
    </recommendedName>
    <alternativeName>
        <fullName evidence="5">PsPto-PscA</fullName>
    </alternativeName>
</protein>
<organism>
    <name type="scientific">Pseudomonas syringae pv. tomato (strain ATCC BAA-871 / DC3000)</name>
    <dbReference type="NCBI Taxonomy" id="223283"/>
    <lineage>
        <taxon>Bacteria</taxon>
        <taxon>Pseudomonadati</taxon>
        <taxon>Pseudomonadota</taxon>
        <taxon>Gammaproteobacteria</taxon>
        <taxon>Pseudomonadales</taxon>
        <taxon>Pseudomonadaceae</taxon>
        <taxon>Pseudomonas</taxon>
    </lineage>
</organism>
<sequence>MKNLGFSKKILLAAALIVVVAFSVFIVINDYRQRQSLKSSVKSELQQLGTLTTQNIQTWLESRIQLLQSMSQQVAVDGKELPQLQRAIGLPTYSDNFQLSYFGSTEGVMFSVPAGNRPADYDPRARGWYKAAQNAPGTIVTEPYIAASSGKLVMTIATPVKIQNQLAGVAGADISLDSVSKIINSLNFDGHGYAFLVSAEGKILVHPDSKLVLKNINEAYPVNTPKIATGVTEIDSGKQPEIISFTPVQGVATANWYVALVLEQDSAYAMLTEFRTSAITAMVVVVMVIILLLGPLIRVLMQPLHQMGRAMRDIADGEGDLTKRLAITSHDEFGALAESFNHFVERIHTSIREVASTAAQLGEVATRVVKVSNASMSNSDQQANRTESVAAAINELGAAAQEIAQNAARTSQQSSDASGLASDGQGVVQQTIKAMNELSGKISESCVNIESLNGKTANIGQILEVITSISQQTNLLALNAAIEAARAGEAGRGFAVVADEVRNLAHRTQDSAQQVQKMIEELQVGAREAVVNMTESQRQSEDSVGIANLAGERLGSVTRRIEEINGMNQSVAAATEEQTSVVESINVDITHINTLNQQGVDNLRQTLEACNSLEEQAARLQQLVGSFRI</sequence>
<accession>Q882Z2</accession>
<evidence type="ECO:0000255" key="1"/>
<evidence type="ECO:0000255" key="2">
    <source>
        <dbReference type="PROSITE-ProRule" id="PRU00102"/>
    </source>
</evidence>
<evidence type="ECO:0000255" key="3">
    <source>
        <dbReference type="PROSITE-ProRule" id="PRU00284"/>
    </source>
</evidence>
<evidence type="ECO:0000269" key="4">
    <source>
    </source>
</evidence>
<evidence type="ECO:0000303" key="5">
    <source>
    </source>
</evidence>
<evidence type="ECO:0000305" key="6"/>
<evidence type="ECO:0000312" key="7">
    <source>
        <dbReference type="EMBL" id="AAO55987.1"/>
    </source>
</evidence>
<keyword id="KW-0997">Cell inner membrane</keyword>
<keyword id="KW-1003">Cell membrane</keyword>
<keyword id="KW-0145">Chemotaxis</keyword>
<keyword id="KW-0472">Membrane</keyword>
<keyword id="KW-0488">Methylation</keyword>
<keyword id="KW-1185">Reference proteome</keyword>
<keyword id="KW-0807">Transducer</keyword>
<keyword id="KW-0812">Transmembrane</keyword>
<keyword id="KW-1133">Transmembrane helix</keyword>
<name>PSCA_PSESM</name>
<gene>
    <name evidence="5" type="primary">pscA</name>
    <name evidence="7" type="ordered locus">PSPTO_2480</name>
</gene>
<reference key="1">
    <citation type="journal article" date="2003" name="Proc. Natl. Acad. Sci. U.S.A.">
        <title>The complete genome sequence of the Arabidopsis and tomato pathogen Pseudomonas syringae pv. tomato DC3000.</title>
        <authorList>
            <person name="Buell C.R."/>
            <person name="Joardar V."/>
            <person name="Lindeberg M."/>
            <person name="Selengut J."/>
            <person name="Paulsen I.T."/>
            <person name="Gwinn M.L."/>
            <person name="Dodson R.J."/>
            <person name="DeBoy R.T."/>
            <person name="Durkin A.S."/>
            <person name="Kolonay J.F."/>
            <person name="Madupu R."/>
            <person name="Daugherty S.C."/>
            <person name="Brinkac L.M."/>
            <person name="Beanan M.J."/>
            <person name="Haft D.H."/>
            <person name="Nelson W.C."/>
            <person name="Davidsen T.M."/>
            <person name="Zafar N."/>
            <person name="Zhou L."/>
            <person name="Liu J."/>
            <person name="Yuan Q."/>
            <person name="Khouri H.M."/>
            <person name="Fedorova N.B."/>
            <person name="Tran B."/>
            <person name="Russell D."/>
            <person name="Berry K.J."/>
            <person name="Utterback T.R."/>
            <person name="Van Aken S.E."/>
            <person name="Feldblyum T.V."/>
            <person name="D'Ascenzo M."/>
            <person name="Deng W.-L."/>
            <person name="Ramos A.R."/>
            <person name="Alfano J.R."/>
            <person name="Cartinhour S."/>
            <person name="Chatterjee A.K."/>
            <person name="Delaney T.P."/>
            <person name="Lazarowitz S.G."/>
            <person name="Martin G.B."/>
            <person name="Schneider D.J."/>
            <person name="Tang X."/>
            <person name="Bender C.L."/>
            <person name="White O."/>
            <person name="Fraser C.M."/>
            <person name="Collmer A."/>
        </authorList>
    </citation>
    <scope>NUCLEOTIDE SEQUENCE [LARGE SCALE GENOMIC DNA]</scope>
    <source>
        <strain>ATCC BAA-871 / DC3000</strain>
    </source>
</reference>
<reference key="2">
    <citation type="journal article" date="2019" name="MBio">
        <title>Chemoperception of specific amino acids controls phytopathogenicity in Pseudomonas syringae pv. tomato.</title>
        <authorList>
            <person name="Cerna-Vargas J.P."/>
            <person name="Santamaria-Hernando S."/>
            <person name="Matilla M.A."/>
            <person name="Rodriguez-Herva J.J."/>
            <person name="Daddaoua A."/>
            <person name="Rodriguez-Palenzuela P."/>
            <person name="Krell T."/>
            <person name="Lopez-Solanilla E."/>
        </authorList>
    </citation>
    <scope>FUNCTION</scope>
    <scope>DISRUPTION PHENOTYPE</scope>
    <source>
        <strain>ATCC BAA-871 / DC3000</strain>
    </source>
</reference>
<proteinExistence type="inferred from homology"/>
<feature type="chain" id="PRO_0000454720" description="Methyl-accepting chemotaxis protein PscA">
    <location>
        <begin position="1"/>
        <end position="629"/>
    </location>
</feature>
<feature type="topological domain" description="Cytoplasmic" evidence="6">
    <location>
        <begin position="1"/>
        <end position="9"/>
    </location>
</feature>
<feature type="transmembrane region" description="Helical" evidence="1">
    <location>
        <begin position="10"/>
        <end position="30"/>
    </location>
</feature>
<feature type="topological domain" description="Periplasmic" evidence="6">
    <location>
        <begin position="31"/>
        <end position="276"/>
    </location>
</feature>
<feature type="transmembrane region" description="Helical" evidence="1">
    <location>
        <begin position="277"/>
        <end position="297"/>
    </location>
</feature>
<feature type="topological domain" description="Cytoplasmic" evidence="6">
    <location>
        <begin position="298"/>
        <end position="629"/>
    </location>
</feature>
<feature type="domain" description="Cache" evidence="1">
    <location>
        <begin position="36"/>
        <end position="258"/>
    </location>
</feature>
<feature type="domain" description="HAMP" evidence="2">
    <location>
        <begin position="298"/>
        <end position="352"/>
    </location>
</feature>
<feature type="domain" description="Methyl-accepting transducer" evidence="3">
    <location>
        <begin position="357"/>
        <end position="593"/>
    </location>
</feature>